<proteinExistence type="inferred from homology"/>
<comment type="function">
    <text evidence="1">Catalyzes the complicated ring closure reaction between the two acyclic compounds 1-deoxy-D-xylulose-5-phosphate (DXP) and 3-amino-2-oxopropyl phosphate (1-amino-acetone-3-phosphate or AAP) to form pyridoxine 5'-phosphate (PNP) and inorganic phosphate.</text>
</comment>
<comment type="catalytic activity">
    <reaction evidence="1">
        <text>3-amino-2-oxopropyl phosphate + 1-deoxy-D-xylulose 5-phosphate = pyridoxine 5'-phosphate + phosphate + 2 H2O + H(+)</text>
        <dbReference type="Rhea" id="RHEA:15265"/>
        <dbReference type="ChEBI" id="CHEBI:15377"/>
        <dbReference type="ChEBI" id="CHEBI:15378"/>
        <dbReference type="ChEBI" id="CHEBI:43474"/>
        <dbReference type="ChEBI" id="CHEBI:57279"/>
        <dbReference type="ChEBI" id="CHEBI:57792"/>
        <dbReference type="ChEBI" id="CHEBI:58589"/>
        <dbReference type="EC" id="2.6.99.2"/>
    </reaction>
</comment>
<comment type="pathway">
    <text evidence="1">Cofactor biosynthesis; pyridoxine 5'-phosphate biosynthesis; pyridoxine 5'-phosphate from D-erythrose 4-phosphate: step 5/5.</text>
</comment>
<comment type="subunit">
    <text evidence="1">Homooctamer; tetramer of dimers.</text>
</comment>
<comment type="subcellular location">
    <subcellularLocation>
        <location evidence="1">Cytoplasm</location>
    </subcellularLocation>
</comment>
<comment type="similarity">
    <text evidence="1">Belongs to the PNP synthase family.</text>
</comment>
<gene>
    <name evidence="1" type="primary">pdxJ</name>
    <name type="ordered locus">Tbd_2083</name>
</gene>
<protein>
    <recommendedName>
        <fullName evidence="1">Pyridoxine 5'-phosphate synthase</fullName>
        <shortName evidence="1">PNP synthase</shortName>
        <ecNumber evidence="1">2.6.99.2</ecNumber>
    </recommendedName>
</protein>
<keyword id="KW-0963">Cytoplasm</keyword>
<keyword id="KW-0664">Pyridoxine biosynthesis</keyword>
<keyword id="KW-1185">Reference proteome</keyword>
<keyword id="KW-0808">Transferase</keyword>
<accession>Q3SH53</accession>
<dbReference type="EC" id="2.6.99.2" evidence="1"/>
<dbReference type="EMBL" id="CP000116">
    <property type="protein sequence ID" value="AAZ98036.1"/>
    <property type="molecule type" value="Genomic_DNA"/>
</dbReference>
<dbReference type="SMR" id="Q3SH53"/>
<dbReference type="STRING" id="292415.Tbd_2083"/>
<dbReference type="KEGG" id="tbd:Tbd_2083"/>
<dbReference type="eggNOG" id="COG0854">
    <property type="taxonomic scope" value="Bacteria"/>
</dbReference>
<dbReference type="HOGENOM" id="CLU_074563_0_0_4"/>
<dbReference type="OrthoDB" id="9806590at2"/>
<dbReference type="UniPathway" id="UPA00244">
    <property type="reaction ID" value="UER00313"/>
</dbReference>
<dbReference type="Proteomes" id="UP000008291">
    <property type="component" value="Chromosome"/>
</dbReference>
<dbReference type="GO" id="GO:0005829">
    <property type="term" value="C:cytosol"/>
    <property type="evidence" value="ECO:0007669"/>
    <property type="project" value="TreeGrafter"/>
</dbReference>
<dbReference type="GO" id="GO:0033856">
    <property type="term" value="F:pyridoxine 5'-phosphate synthase activity"/>
    <property type="evidence" value="ECO:0007669"/>
    <property type="project" value="UniProtKB-EC"/>
</dbReference>
<dbReference type="GO" id="GO:0008615">
    <property type="term" value="P:pyridoxine biosynthetic process"/>
    <property type="evidence" value="ECO:0007669"/>
    <property type="project" value="UniProtKB-UniRule"/>
</dbReference>
<dbReference type="CDD" id="cd00003">
    <property type="entry name" value="PNPsynthase"/>
    <property type="match status" value="1"/>
</dbReference>
<dbReference type="FunFam" id="3.20.20.70:FF:000042">
    <property type="entry name" value="Pyridoxine 5'-phosphate synthase"/>
    <property type="match status" value="1"/>
</dbReference>
<dbReference type="Gene3D" id="3.20.20.70">
    <property type="entry name" value="Aldolase class I"/>
    <property type="match status" value="1"/>
</dbReference>
<dbReference type="HAMAP" id="MF_00279">
    <property type="entry name" value="PdxJ"/>
    <property type="match status" value="1"/>
</dbReference>
<dbReference type="InterPro" id="IPR013785">
    <property type="entry name" value="Aldolase_TIM"/>
</dbReference>
<dbReference type="InterPro" id="IPR004569">
    <property type="entry name" value="PyrdxlP_synth_PdxJ"/>
</dbReference>
<dbReference type="InterPro" id="IPR036130">
    <property type="entry name" value="Pyridoxine-5'_phos_synth"/>
</dbReference>
<dbReference type="NCBIfam" id="TIGR00559">
    <property type="entry name" value="pdxJ"/>
    <property type="match status" value="1"/>
</dbReference>
<dbReference type="NCBIfam" id="NF003623">
    <property type="entry name" value="PRK05265.1-1"/>
    <property type="match status" value="1"/>
</dbReference>
<dbReference type="NCBIfam" id="NF003624">
    <property type="entry name" value="PRK05265.1-2"/>
    <property type="match status" value="1"/>
</dbReference>
<dbReference type="NCBIfam" id="NF003625">
    <property type="entry name" value="PRK05265.1-3"/>
    <property type="match status" value="1"/>
</dbReference>
<dbReference type="NCBIfam" id="NF003627">
    <property type="entry name" value="PRK05265.1-5"/>
    <property type="match status" value="1"/>
</dbReference>
<dbReference type="PANTHER" id="PTHR30456">
    <property type="entry name" value="PYRIDOXINE 5'-PHOSPHATE SYNTHASE"/>
    <property type="match status" value="1"/>
</dbReference>
<dbReference type="PANTHER" id="PTHR30456:SF0">
    <property type="entry name" value="PYRIDOXINE 5'-PHOSPHATE SYNTHASE"/>
    <property type="match status" value="1"/>
</dbReference>
<dbReference type="Pfam" id="PF03740">
    <property type="entry name" value="PdxJ"/>
    <property type="match status" value="1"/>
</dbReference>
<dbReference type="SUPFAM" id="SSF63892">
    <property type="entry name" value="Pyridoxine 5'-phosphate synthase"/>
    <property type="match status" value="1"/>
</dbReference>
<reference key="1">
    <citation type="journal article" date="2006" name="J. Bacteriol.">
        <title>The genome sequence of the obligately chemolithoautotrophic, facultatively anaerobic bacterium Thiobacillus denitrificans.</title>
        <authorList>
            <person name="Beller H.R."/>
            <person name="Chain P.S."/>
            <person name="Letain T.E."/>
            <person name="Chakicherla A."/>
            <person name="Larimer F.W."/>
            <person name="Richardson P.M."/>
            <person name="Coleman M.A."/>
            <person name="Wood A.P."/>
            <person name="Kelly D.P."/>
        </authorList>
    </citation>
    <scope>NUCLEOTIDE SEQUENCE [LARGE SCALE GENOMIC DNA]</scope>
    <source>
        <strain>ATCC 25259 / T1</strain>
    </source>
</reference>
<name>PDXJ_THIDA</name>
<organism>
    <name type="scientific">Thiobacillus denitrificans (strain ATCC 25259 / T1)</name>
    <dbReference type="NCBI Taxonomy" id="292415"/>
    <lineage>
        <taxon>Bacteria</taxon>
        <taxon>Pseudomonadati</taxon>
        <taxon>Pseudomonadota</taxon>
        <taxon>Betaproteobacteria</taxon>
        <taxon>Nitrosomonadales</taxon>
        <taxon>Thiobacillaceae</taxon>
        <taxon>Thiobacillus</taxon>
    </lineage>
</organism>
<feature type="chain" id="PRO_0000231851" description="Pyridoxine 5'-phosphate synthase">
    <location>
        <begin position="1"/>
        <end position="246"/>
    </location>
</feature>
<feature type="active site" description="Proton acceptor" evidence="1">
    <location>
        <position position="48"/>
    </location>
</feature>
<feature type="active site" description="Proton acceptor" evidence="1">
    <location>
        <position position="75"/>
    </location>
</feature>
<feature type="active site" description="Proton donor" evidence="1">
    <location>
        <position position="196"/>
    </location>
</feature>
<feature type="binding site" evidence="1">
    <location>
        <position position="12"/>
    </location>
    <ligand>
        <name>3-amino-2-oxopropyl phosphate</name>
        <dbReference type="ChEBI" id="CHEBI:57279"/>
    </ligand>
</feature>
<feature type="binding site" evidence="1">
    <location>
        <begin position="14"/>
        <end position="15"/>
    </location>
    <ligand>
        <name>1-deoxy-D-xylulose 5-phosphate</name>
        <dbReference type="ChEBI" id="CHEBI:57792"/>
    </ligand>
</feature>
<feature type="binding site" evidence="1">
    <location>
        <position position="23"/>
    </location>
    <ligand>
        <name>3-amino-2-oxopropyl phosphate</name>
        <dbReference type="ChEBI" id="CHEBI:57279"/>
    </ligand>
</feature>
<feature type="binding site" evidence="1">
    <location>
        <position position="50"/>
    </location>
    <ligand>
        <name>1-deoxy-D-xylulose 5-phosphate</name>
        <dbReference type="ChEBI" id="CHEBI:57792"/>
    </ligand>
</feature>
<feature type="binding site" evidence="1">
    <location>
        <position position="55"/>
    </location>
    <ligand>
        <name>1-deoxy-D-xylulose 5-phosphate</name>
        <dbReference type="ChEBI" id="CHEBI:57792"/>
    </ligand>
</feature>
<feature type="binding site" evidence="1">
    <location>
        <position position="105"/>
    </location>
    <ligand>
        <name>1-deoxy-D-xylulose 5-phosphate</name>
        <dbReference type="ChEBI" id="CHEBI:57792"/>
    </ligand>
</feature>
<feature type="binding site" evidence="1">
    <location>
        <position position="197"/>
    </location>
    <ligand>
        <name>3-amino-2-oxopropyl phosphate</name>
        <dbReference type="ChEBI" id="CHEBI:57279"/>
    </ligand>
</feature>
<feature type="binding site" evidence="1">
    <location>
        <begin position="218"/>
        <end position="219"/>
    </location>
    <ligand>
        <name>3-amino-2-oxopropyl phosphate</name>
        <dbReference type="ChEBI" id="CHEBI:57279"/>
    </ligand>
</feature>
<feature type="site" description="Transition state stabilizer" evidence="1">
    <location>
        <position position="156"/>
    </location>
</feature>
<evidence type="ECO:0000255" key="1">
    <source>
        <dbReference type="HAMAP-Rule" id="MF_00279"/>
    </source>
</evidence>
<sequence length="246" mass="26305">MGGAMSIYLGVNIDHIATLRQARKTRYPSPVEAALAAETAGADSITLHLREDRRHIQDADVTILRQTLKTKMNLEMAVTEEMLGIALETRPSDVCLVPEKREELTTEGGLDVAGQQAKMRDACARLGDAGIRVSLFIDADFAQLDAAHAAGAPVVEIHTGHYADAASDAARAAEFERIRRAVAYGRSLGLTVNAGHGLTYHNVQPIAALPGIHELNIGHAIVAQALFVGWKEAVAEMKRLMVAAAG</sequence>